<gene>
    <name evidence="1" type="primary">rpsS</name>
    <name type="ordered locus">PSPTO_0630</name>
</gene>
<protein>
    <recommendedName>
        <fullName evidence="1">Small ribosomal subunit protein uS19</fullName>
    </recommendedName>
    <alternativeName>
        <fullName evidence="2">30S ribosomal protein S19</fullName>
    </alternativeName>
</protein>
<organism>
    <name type="scientific">Pseudomonas syringae pv. tomato (strain ATCC BAA-871 / DC3000)</name>
    <dbReference type="NCBI Taxonomy" id="223283"/>
    <lineage>
        <taxon>Bacteria</taxon>
        <taxon>Pseudomonadati</taxon>
        <taxon>Pseudomonadota</taxon>
        <taxon>Gammaproteobacteria</taxon>
        <taxon>Pseudomonadales</taxon>
        <taxon>Pseudomonadaceae</taxon>
        <taxon>Pseudomonas</taxon>
    </lineage>
</organism>
<keyword id="KW-1185">Reference proteome</keyword>
<keyword id="KW-0687">Ribonucleoprotein</keyword>
<keyword id="KW-0689">Ribosomal protein</keyword>
<keyword id="KW-0694">RNA-binding</keyword>
<keyword id="KW-0699">rRNA-binding</keyword>
<feature type="chain" id="PRO_0000129885" description="Small ribosomal subunit protein uS19">
    <location>
        <begin position="1"/>
        <end position="91"/>
    </location>
</feature>
<reference key="1">
    <citation type="journal article" date="2003" name="Proc. Natl. Acad. Sci. U.S.A.">
        <title>The complete genome sequence of the Arabidopsis and tomato pathogen Pseudomonas syringae pv. tomato DC3000.</title>
        <authorList>
            <person name="Buell C.R."/>
            <person name="Joardar V."/>
            <person name="Lindeberg M."/>
            <person name="Selengut J."/>
            <person name="Paulsen I.T."/>
            <person name="Gwinn M.L."/>
            <person name="Dodson R.J."/>
            <person name="DeBoy R.T."/>
            <person name="Durkin A.S."/>
            <person name="Kolonay J.F."/>
            <person name="Madupu R."/>
            <person name="Daugherty S.C."/>
            <person name="Brinkac L.M."/>
            <person name="Beanan M.J."/>
            <person name="Haft D.H."/>
            <person name="Nelson W.C."/>
            <person name="Davidsen T.M."/>
            <person name="Zafar N."/>
            <person name="Zhou L."/>
            <person name="Liu J."/>
            <person name="Yuan Q."/>
            <person name="Khouri H.M."/>
            <person name="Fedorova N.B."/>
            <person name="Tran B."/>
            <person name="Russell D."/>
            <person name="Berry K.J."/>
            <person name="Utterback T.R."/>
            <person name="Van Aken S.E."/>
            <person name="Feldblyum T.V."/>
            <person name="D'Ascenzo M."/>
            <person name="Deng W.-L."/>
            <person name="Ramos A.R."/>
            <person name="Alfano J.R."/>
            <person name="Cartinhour S."/>
            <person name="Chatterjee A.K."/>
            <person name="Delaney T.P."/>
            <person name="Lazarowitz S.G."/>
            <person name="Martin G.B."/>
            <person name="Schneider D.J."/>
            <person name="Tang X."/>
            <person name="Bender C.L."/>
            <person name="White O."/>
            <person name="Fraser C.M."/>
            <person name="Collmer A."/>
        </authorList>
    </citation>
    <scope>NUCLEOTIDE SEQUENCE [LARGE SCALE GENOMIC DNA]</scope>
    <source>
        <strain>ATCC BAA-871 / DC3000</strain>
    </source>
</reference>
<comment type="function">
    <text evidence="1">Protein S19 forms a complex with S13 that binds strongly to the 16S ribosomal RNA.</text>
</comment>
<comment type="similarity">
    <text evidence="1">Belongs to the universal ribosomal protein uS19 family.</text>
</comment>
<name>RS19_PSESM</name>
<dbReference type="EMBL" id="AE016853">
    <property type="protein sequence ID" value="AAO54172.1"/>
    <property type="molecule type" value="Genomic_DNA"/>
</dbReference>
<dbReference type="RefSeq" id="NP_790477.1">
    <property type="nucleotide sequence ID" value="NC_004578.1"/>
</dbReference>
<dbReference type="RefSeq" id="WP_004883670.1">
    <property type="nucleotide sequence ID" value="NC_004578.1"/>
</dbReference>
<dbReference type="SMR" id="Q889W7"/>
<dbReference type="STRING" id="223283.PSPTO_0630"/>
<dbReference type="GeneID" id="93661241"/>
<dbReference type="KEGG" id="pst:PSPTO_0630"/>
<dbReference type="PATRIC" id="fig|223283.9.peg.636"/>
<dbReference type="eggNOG" id="COG0185">
    <property type="taxonomic scope" value="Bacteria"/>
</dbReference>
<dbReference type="HOGENOM" id="CLU_144911_0_1_6"/>
<dbReference type="OrthoDB" id="9797833at2"/>
<dbReference type="PhylomeDB" id="Q889W7"/>
<dbReference type="Proteomes" id="UP000002515">
    <property type="component" value="Chromosome"/>
</dbReference>
<dbReference type="GO" id="GO:0005737">
    <property type="term" value="C:cytoplasm"/>
    <property type="evidence" value="ECO:0007669"/>
    <property type="project" value="UniProtKB-ARBA"/>
</dbReference>
<dbReference type="GO" id="GO:0015935">
    <property type="term" value="C:small ribosomal subunit"/>
    <property type="evidence" value="ECO:0007669"/>
    <property type="project" value="InterPro"/>
</dbReference>
<dbReference type="GO" id="GO:0019843">
    <property type="term" value="F:rRNA binding"/>
    <property type="evidence" value="ECO:0007669"/>
    <property type="project" value="UniProtKB-UniRule"/>
</dbReference>
<dbReference type="GO" id="GO:0003735">
    <property type="term" value="F:structural constituent of ribosome"/>
    <property type="evidence" value="ECO:0007669"/>
    <property type="project" value="InterPro"/>
</dbReference>
<dbReference type="GO" id="GO:0000028">
    <property type="term" value="P:ribosomal small subunit assembly"/>
    <property type="evidence" value="ECO:0007669"/>
    <property type="project" value="TreeGrafter"/>
</dbReference>
<dbReference type="GO" id="GO:0006412">
    <property type="term" value="P:translation"/>
    <property type="evidence" value="ECO:0007669"/>
    <property type="project" value="UniProtKB-UniRule"/>
</dbReference>
<dbReference type="FunFam" id="3.30.860.10:FF:000001">
    <property type="entry name" value="30S ribosomal protein S19"/>
    <property type="match status" value="1"/>
</dbReference>
<dbReference type="Gene3D" id="3.30.860.10">
    <property type="entry name" value="30s Ribosomal Protein S19, Chain A"/>
    <property type="match status" value="1"/>
</dbReference>
<dbReference type="HAMAP" id="MF_00531">
    <property type="entry name" value="Ribosomal_uS19"/>
    <property type="match status" value="1"/>
</dbReference>
<dbReference type="InterPro" id="IPR002222">
    <property type="entry name" value="Ribosomal_uS19"/>
</dbReference>
<dbReference type="InterPro" id="IPR005732">
    <property type="entry name" value="Ribosomal_uS19_bac-type"/>
</dbReference>
<dbReference type="InterPro" id="IPR020934">
    <property type="entry name" value="Ribosomal_uS19_CS"/>
</dbReference>
<dbReference type="InterPro" id="IPR023575">
    <property type="entry name" value="Ribosomal_uS19_SF"/>
</dbReference>
<dbReference type="NCBIfam" id="TIGR01050">
    <property type="entry name" value="rpsS_bact"/>
    <property type="match status" value="1"/>
</dbReference>
<dbReference type="PANTHER" id="PTHR11880">
    <property type="entry name" value="RIBOSOMAL PROTEIN S19P FAMILY MEMBER"/>
    <property type="match status" value="1"/>
</dbReference>
<dbReference type="PANTHER" id="PTHR11880:SF8">
    <property type="entry name" value="SMALL RIBOSOMAL SUBUNIT PROTEIN US19M"/>
    <property type="match status" value="1"/>
</dbReference>
<dbReference type="Pfam" id="PF00203">
    <property type="entry name" value="Ribosomal_S19"/>
    <property type="match status" value="1"/>
</dbReference>
<dbReference type="PIRSF" id="PIRSF002144">
    <property type="entry name" value="Ribosomal_S19"/>
    <property type="match status" value="1"/>
</dbReference>
<dbReference type="PRINTS" id="PR00975">
    <property type="entry name" value="RIBOSOMALS19"/>
</dbReference>
<dbReference type="SUPFAM" id="SSF54570">
    <property type="entry name" value="Ribosomal protein S19"/>
    <property type="match status" value="1"/>
</dbReference>
<dbReference type="PROSITE" id="PS00323">
    <property type="entry name" value="RIBOSOMAL_S19"/>
    <property type="match status" value="1"/>
</dbReference>
<proteinExistence type="inferred from homology"/>
<sequence>MPRSLKKGPFIDLHLLKKIEVAAEKNDRKPVKTWSRRSMILPQMVGLTIAVHNGRQHVPVLVSEDMVGHKLGEFAGTRTYRGHVADKKAKR</sequence>
<evidence type="ECO:0000255" key="1">
    <source>
        <dbReference type="HAMAP-Rule" id="MF_00531"/>
    </source>
</evidence>
<evidence type="ECO:0000305" key="2"/>
<accession>Q889W7</accession>